<evidence type="ECO:0000250" key="1"/>
<evidence type="ECO:0000305" key="2"/>
<name>RPSC_SYNY3</name>
<feature type="chain" id="PRO_0000093937" description="Probable RNA polymerase sigma-C factor">
    <location>
        <begin position="1"/>
        <end position="404"/>
    </location>
</feature>
<feature type="DNA-binding region" description="H-T-H motif" evidence="1">
    <location>
        <begin position="362"/>
        <end position="381"/>
    </location>
</feature>
<feature type="short sequence motif" description="Polymerase core binding">
    <location>
        <begin position="193"/>
        <end position="206"/>
    </location>
</feature>
<comment type="function">
    <text>Sigma factors are initiation factors that promote the attachment of RNA polymerase to specific initiation sites and are then released.</text>
</comment>
<comment type="similarity">
    <text evidence="2">Belongs to the sigma-70 factor family.</text>
</comment>
<dbReference type="EMBL" id="BA000022">
    <property type="protein sequence ID" value="BAA10419.1"/>
    <property type="molecule type" value="Genomic_DNA"/>
</dbReference>
<dbReference type="PIR" id="S76573">
    <property type="entry name" value="S76573"/>
</dbReference>
<dbReference type="SMR" id="Q59996"/>
<dbReference type="IntAct" id="Q59996">
    <property type="interactions" value="13"/>
</dbReference>
<dbReference type="STRING" id="1148.gene:10499920"/>
<dbReference type="PaxDb" id="1148-1001684"/>
<dbReference type="EnsemblBacteria" id="BAA10419">
    <property type="protein sequence ID" value="BAA10419"/>
    <property type="gene ID" value="BAA10419"/>
</dbReference>
<dbReference type="KEGG" id="syn:sll0184"/>
<dbReference type="eggNOG" id="COG0568">
    <property type="taxonomic scope" value="Bacteria"/>
</dbReference>
<dbReference type="InParanoid" id="Q59996"/>
<dbReference type="PhylomeDB" id="Q59996"/>
<dbReference type="Proteomes" id="UP000001425">
    <property type="component" value="Chromosome"/>
</dbReference>
<dbReference type="GO" id="GO:0003677">
    <property type="term" value="F:DNA binding"/>
    <property type="evidence" value="ECO:0007669"/>
    <property type="project" value="UniProtKB-KW"/>
</dbReference>
<dbReference type="GO" id="GO:0016987">
    <property type="term" value="F:sigma factor activity"/>
    <property type="evidence" value="ECO:0007669"/>
    <property type="project" value="UniProtKB-KW"/>
</dbReference>
<dbReference type="GO" id="GO:0006352">
    <property type="term" value="P:DNA-templated transcription initiation"/>
    <property type="evidence" value="ECO:0007669"/>
    <property type="project" value="InterPro"/>
</dbReference>
<dbReference type="CDD" id="cd06171">
    <property type="entry name" value="Sigma70_r4"/>
    <property type="match status" value="1"/>
</dbReference>
<dbReference type="FunFam" id="1.10.601.10:FF:000001">
    <property type="entry name" value="RNA polymerase sigma factor SigA"/>
    <property type="match status" value="1"/>
</dbReference>
<dbReference type="Gene3D" id="1.10.601.10">
    <property type="entry name" value="RNA Polymerase Primary Sigma Factor"/>
    <property type="match status" value="2"/>
</dbReference>
<dbReference type="Gene3D" id="1.10.10.10">
    <property type="entry name" value="Winged helix-like DNA-binding domain superfamily/Winged helix DNA-binding domain"/>
    <property type="match status" value="2"/>
</dbReference>
<dbReference type="InterPro" id="IPR014284">
    <property type="entry name" value="RNA_pol_sigma-70_dom"/>
</dbReference>
<dbReference type="InterPro" id="IPR000943">
    <property type="entry name" value="RNA_pol_sigma70"/>
</dbReference>
<dbReference type="InterPro" id="IPR009042">
    <property type="entry name" value="RNA_pol_sigma70_r1_2"/>
</dbReference>
<dbReference type="InterPro" id="IPR007627">
    <property type="entry name" value="RNA_pol_sigma70_r2"/>
</dbReference>
<dbReference type="InterPro" id="IPR007624">
    <property type="entry name" value="RNA_pol_sigma70_r3"/>
</dbReference>
<dbReference type="InterPro" id="IPR007630">
    <property type="entry name" value="RNA_pol_sigma70_r4"/>
</dbReference>
<dbReference type="InterPro" id="IPR013325">
    <property type="entry name" value="RNA_pol_sigma_r2"/>
</dbReference>
<dbReference type="InterPro" id="IPR013324">
    <property type="entry name" value="RNA_pol_sigma_r3/r4-like"/>
</dbReference>
<dbReference type="InterPro" id="IPR017848">
    <property type="entry name" value="RNA_pol_sigma_RpoD/SigA_cyanob"/>
</dbReference>
<dbReference type="InterPro" id="IPR050239">
    <property type="entry name" value="Sigma-70_RNA_pol_init_factors"/>
</dbReference>
<dbReference type="InterPro" id="IPR036388">
    <property type="entry name" value="WH-like_DNA-bd_sf"/>
</dbReference>
<dbReference type="NCBIfam" id="NF005785">
    <property type="entry name" value="PRK07598.1"/>
    <property type="match status" value="1"/>
</dbReference>
<dbReference type="NCBIfam" id="TIGR02997">
    <property type="entry name" value="Sig70-cyanoRpoD"/>
    <property type="match status" value="1"/>
</dbReference>
<dbReference type="NCBIfam" id="TIGR02937">
    <property type="entry name" value="sigma70-ECF"/>
    <property type="match status" value="1"/>
</dbReference>
<dbReference type="PANTHER" id="PTHR30603">
    <property type="entry name" value="RNA POLYMERASE SIGMA FACTOR RPO"/>
    <property type="match status" value="1"/>
</dbReference>
<dbReference type="PANTHER" id="PTHR30603:SF60">
    <property type="entry name" value="RNA POLYMERASE SIGMA FACTOR RPOD"/>
    <property type="match status" value="1"/>
</dbReference>
<dbReference type="Pfam" id="PF00140">
    <property type="entry name" value="Sigma70_r1_2"/>
    <property type="match status" value="1"/>
</dbReference>
<dbReference type="Pfam" id="PF04542">
    <property type="entry name" value="Sigma70_r2"/>
    <property type="match status" value="1"/>
</dbReference>
<dbReference type="Pfam" id="PF04539">
    <property type="entry name" value="Sigma70_r3"/>
    <property type="match status" value="1"/>
</dbReference>
<dbReference type="Pfam" id="PF04545">
    <property type="entry name" value="Sigma70_r4"/>
    <property type="match status" value="1"/>
</dbReference>
<dbReference type="PRINTS" id="PR00046">
    <property type="entry name" value="SIGMA70FCT"/>
</dbReference>
<dbReference type="SUPFAM" id="SSF88946">
    <property type="entry name" value="Sigma2 domain of RNA polymerase sigma factors"/>
    <property type="match status" value="1"/>
</dbReference>
<dbReference type="SUPFAM" id="SSF88659">
    <property type="entry name" value="Sigma3 and sigma4 domains of RNA polymerase sigma factors"/>
    <property type="match status" value="2"/>
</dbReference>
<dbReference type="PROSITE" id="PS00715">
    <property type="entry name" value="SIGMA70_1"/>
    <property type="match status" value="1"/>
</dbReference>
<dbReference type="PROSITE" id="PS00716">
    <property type="entry name" value="SIGMA70_2"/>
    <property type="match status" value="1"/>
</dbReference>
<reference key="1">
    <citation type="journal article" date="1995" name="DNA Res.">
        <title>Sequence analysis of the genome of the unicellular cyanobacterium Synechocystis sp. strain PCC6803. I. Sequence features in the 1 Mb region from map positions 64% to 92% of the genome.</title>
        <authorList>
            <person name="Kaneko T."/>
            <person name="Tanaka A."/>
            <person name="Sato S."/>
            <person name="Kotani H."/>
            <person name="Sazuka T."/>
            <person name="Miyajima N."/>
            <person name="Sugiura M."/>
            <person name="Tabata S."/>
        </authorList>
    </citation>
    <scope>NUCLEOTIDE SEQUENCE [LARGE SCALE GENOMIC DNA]</scope>
    <source>
        <strain>ATCC 27184 / PCC 6803 / N-1</strain>
    </source>
</reference>
<reference key="2">
    <citation type="journal article" date="1996" name="DNA Res.">
        <title>Sequence analysis of the genome of the unicellular cyanobacterium Synechocystis sp. strain PCC6803. II. Sequence determination of the entire genome and assignment of potential protein-coding regions.</title>
        <authorList>
            <person name="Kaneko T."/>
            <person name="Sato S."/>
            <person name="Kotani H."/>
            <person name="Tanaka A."/>
            <person name="Asamizu E."/>
            <person name="Nakamura Y."/>
            <person name="Miyajima N."/>
            <person name="Hirosawa M."/>
            <person name="Sugiura M."/>
            <person name="Sasamoto S."/>
            <person name="Kimura T."/>
            <person name="Hosouchi T."/>
            <person name="Matsuno A."/>
            <person name="Muraki A."/>
            <person name="Nakazaki N."/>
            <person name="Naruo K."/>
            <person name="Okumura S."/>
            <person name="Shimpo S."/>
            <person name="Takeuchi C."/>
            <person name="Wada T."/>
            <person name="Watanabe A."/>
            <person name="Yamada M."/>
            <person name="Yasuda M."/>
            <person name="Tabata S."/>
        </authorList>
    </citation>
    <scope>NUCLEOTIDE SEQUENCE [LARGE SCALE GENOMIC DNA]</scope>
    <source>
        <strain>ATCC 27184 / PCC 6803 / Kazusa</strain>
    </source>
</reference>
<proteinExistence type="inferred from homology"/>
<protein>
    <recommendedName>
        <fullName>Probable RNA polymerase sigma-C factor</fullName>
    </recommendedName>
</protein>
<keyword id="KW-0238">DNA-binding</keyword>
<keyword id="KW-1185">Reference proteome</keyword>
<keyword id="KW-0731">Sigma factor</keyword>
<keyword id="KW-0804">Transcription</keyword>
<keyword id="KW-0805">Transcription regulation</keyword>
<gene>
    <name type="primary">sigC</name>
    <name type="ordered locus">sll0184</name>
</gene>
<sequence length="404" mass="46581">MTKPSNDEPPLTNVRDLEAMLPLEEEDLTADSQDLEYTAVAHRQQFSTDLVRLYLQDIGRIPLLKRDEEVHIAQQVQSYLRLVEIQNRAAESDAAIDQYQTAIAVHDQLLVQLGHRPSYERWAKILGQTVATLKQTLKSGKKRWAELAGLTVEELENIEKQGITAKAHMIKANLRLVVSVAKKYQNRGLELLDLIQEGTLGLERAVEKFDPTKGYRFSTYSYWWIRQGITRAIATQSRMIRLPVHITEKLNKIKRAQRKISQEKGHTPKIDEVAEELGMTPEQVREVLTQVPRSVSLELKVGQDKDTELMDLLETDTQSPEDELMREALQNDMQEILLDLTPREQEVIALRFGFQDGVAHSLSEIGRILNLSRERVRQIEAKALQKLRHPRRRDRIRDYYENLG</sequence>
<organism>
    <name type="scientific">Synechocystis sp. (strain ATCC 27184 / PCC 6803 / Kazusa)</name>
    <dbReference type="NCBI Taxonomy" id="1111708"/>
    <lineage>
        <taxon>Bacteria</taxon>
        <taxon>Bacillati</taxon>
        <taxon>Cyanobacteriota</taxon>
        <taxon>Cyanophyceae</taxon>
        <taxon>Synechococcales</taxon>
        <taxon>Merismopediaceae</taxon>
        <taxon>Synechocystis</taxon>
    </lineage>
</organism>
<accession>Q59996</accession>